<feature type="chain" id="PRO_1000083897" description="Urease accessory protein UreE">
    <location>
        <begin position="1"/>
        <end position="163"/>
    </location>
</feature>
<feature type="region of interest" description="Disordered" evidence="2">
    <location>
        <begin position="134"/>
        <end position="163"/>
    </location>
</feature>
<comment type="function">
    <text evidence="1">Involved in urease metallocenter assembly. Binds nickel. Probably functions as a nickel donor during metallocenter assembly.</text>
</comment>
<comment type="subcellular location">
    <subcellularLocation>
        <location evidence="1">Cytoplasm</location>
    </subcellularLocation>
</comment>
<comment type="similarity">
    <text evidence="1">Belongs to the UreE family.</text>
</comment>
<evidence type="ECO:0000255" key="1">
    <source>
        <dbReference type="HAMAP-Rule" id="MF_00822"/>
    </source>
</evidence>
<evidence type="ECO:0000256" key="2">
    <source>
        <dbReference type="SAM" id="MobiDB-lite"/>
    </source>
</evidence>
<proteinExistence type="inferred from homology"/>
<name>UREE_METFK</name>
<gene>
    <name evidence="1" type="primary">ureE</name>
    <name type="ordered locus">Mfla_1766</name>
</gene>
<reference key="1">
    <citation type="submission" date="2006-03" db="EMBL/GenBank/DDBJ databases">
        <title>Complete sequence of Methylobacillus flagellatus KT.</title>
        <authorList>
            <consortium name="US DOE Joint Genome Institute"/>
            <person name="Copeland A."/>
            <person name="Lucas S."/>
            <person name="Lapidus A."/>
            <person name="Barry K."/>
            <person name="Detter J.C."/>
            <person name="Glavina del Rio T."/>
            <person name="Hammon N."/>
            <person name="Israni S."/>
            <person name="Dalin E."/>
            <person name="Tice H."/>
            <person name="Pitluck S."/>
            <person name="Brettin T."/>
            <person name="Bruce D."/>
            <person name="Han C."/>
            <person name="Tapia R."/>
            <person name="Saunders E."/>
            <person name="Gilna P."/>
            <person name="Schmutz J."/>
            <person name="Larimer F."/>
            <person name="Land M."/>
            <person name="Kyrpides N."/>
            <person name="Anderson I."/>
            <person name="Richardson P."/>
        </authorList>
    </citation>
    <scope>NUCLEOTIDE SEQUENCE [LARGE SCALE GENOMIC DNA]</scope>
    <source>
        <strain>ATCC 51484 / DSM 6875 / VKM B-1610 / KT</strain>
    </source>
</reference>
<keyword id="KW-0143">Chaperone</keyword>
<keyword id="KW-0963">Cytoplasm</keyword>
<keyword id="KW-0533">Nickel</keyword>
<keyword id="KW-0996">Nickel insertion</keyword>
<keyword id="KW-1185">Reference proteome</keyword>
<protein>
    <recommendedName>
        <fullName evidence="1">Urease accessory protein UreE</fullName>
    </recommendedName>
</protein>
<dbReference type="EMBL" id="CP000284">
    <property type="protein sequence ID" value="ABE50034.1"/>
    <property type="molecule type" value="Genomic_DNA"/>
</dbReference>
<dbReference type="RefSeq" id="WP_011479988.1">
    <property type="nucleotide sequence ID" value="NC_007947.1"/>
</dbReference>
<dbReference type="SMR" id="Q1H0F3"/>
<dbReference type="STRING" id="265072.Mfla_1766"/>
<dbReference type="KEGG" id="mfa:Mfla_1766"/>
<dbReference type="eggNOG" id="COG2371">
    <property type="taxonomic scope" value="Bacteria"/>
</dbReference>
<dbReference type="HOGENOM" id="CLU_093757_2_0_4"/>
<dbReference type="OrthoDB" id="5421304at2"/>
<dbReference type="Proteomes" id="UP000002440">
    <property type="component" value="Chromosome"/>
</dbReference>
<dbReference type="GO" id="GO:0005737">
    <property type="term" value="C:cytoplasm"/>
    <property type="evidence" value="ECO:0007669"/>
    <property type="project" value="UniProtKB-SubCell"/>
</dbReference>
<dbReference type="GO" id="GO:0016151">
    <property type="term" value="F:nickel cation binding"/>
    <property type="evidence" value="ECO:0007669"/>
    <property type="project" value="UniProtKB-UniRule"/>
</dbReference>
<dbReference type="GO" id="GO:0051082">
    <property type="term" value="F:unfolded protein binding"/>
    <property type="evidence" value="ECO:0007669"/>
    <property type="project" value="UniProtKB-UniRule"/>
</dbReference>
<dbReference type="GO" id="GO:0006457">
    <property type="term" value="P:protein folding"/>
    <property type="evidence" value="ECO:0007669"/>
    <property type="project" value="InterPro"/>
</dbReference>
<dbReference type="GO" id="GO:0065003">
    <property type="term" value="P:protein-containing complex assembly"/>
    <property type="evidence" value="ECO:0007669"/>
    <property type="project" value="InterPro"/>
</dbReference>
<dbReference type="GO" id="GO:0019627">
    <property type="term" value="P:urea metabolic process"/>
    <property type="evidence" value="ECO:0007669"/>
    <property type="project" value="InterPro"/>
</dbReference>
<dbReference type="CDD" id="cd00571">
    <property type="entry name" value="UreE"/>
    <property type="match status" value="1"/>
</dbReference>
<dbReference type="Gene3D" id="2.60.260.20">
    <property type="entry name" value="Urease metallochaperone UreE, N-terminal domain"/>
    <property type="match status" value="1"/>
</dbReference>
<dbReference type="Gene3D" id="3.30.70.790">
    <property type="entry name" value="UreE, C-terminal domain"/>
    <property type="match status" value="1"/>
</dbReference>
<dbReference type="HAMAP" id="MF_00822">
    <property type="entry name" value="UreE"/>
    <property type="match status" value="1"/>
</dbReference>
<dbReference type="InterPro" id="IPR012406">
    <property type="entry name" value="UreE"/>
</dbReference>
<dbReference type="InterPro" id="IPR007864">
    <property type="entry name" value="UreE_C_dom"/>
</dbReference>
<dbReference type="InterPro" id="IPR004029">
    <property type="entry name" value="UreE_N"/>
</dbReference>
<dbReference type="InterPro" id="IPR036118">
    <property type="entry name" value="UreE_N_sf"/>
</dbReference>
<dbReference type="NCBIfam" id="NF009751">
    <property type="entry name" value="PRK13261.1-1"/>
    <property type="match status" value="1"/>
</dbReference>
<dbReference type="Pfam" id="PF05194">
    <property type="entry name" value="UreE_C"/>
    <property type="match status" value="1"/>
</dbReference>
<dbReference type="Pfam" id="PF02814">
    <property type="entry name" value="UreE_N"/>
    <property type="match status" value="1"/>
</dbReference>
<dbReference type="PIRSF" id="PIRSF036402">
    <property type="entry name" value="Ureas_acces_UreE"/>
    <property type="match status" value="1"/>
</dbReference>
<dbReference type="SMART" id="SM00988">
    <property type="entry name" value="UreE_N"/>
    <property type="match status" value="1"/>
</dbReference>
<dbReference type="SUPFAM" id="SSF69737">
    <property type="entry name" value="Urease metallochaperone UreE, C-terminal domain"/>
    <property type="match status" value="1"/>
</dbReference>
<dbReference type="SUPFAM" id="SSF69287">
    <property type="entry name" value="Urease metallochaperone UreE, N-terminal domain"/>
    <property type="match status" value="1"/>
</dbReference>
<sequence length="163" mass="17936">MLGISKKIETASQVDDQLVLPFDRRQKSRLRVELASGTEAALLLERGTVLRGGDLLQAEDGRVVQVVAADEPVLRVTAATPRELARAAYHLGNRHVPLEVGDGWLRLEQDHVLQEMLLGLGVQVEGQMAPFEPEAGAYGGGHRHHHDDDAPSIRQPARLRIHE</sequence>
<organism>
    <name type="scientific">Methylobacillus flagellatus (strain ATCC 51484 / DSM 6875 / VKM B-1610 / KT)</name>
    <dbReference type="NCBI Taxonomy" id="265072"/>
    <lineage>
        <taxon>Bacteria</taxon>
        <taxon>Pseudomonadati</taxon>
        <taxon>Pseudomonadota</taxon>
        <taxon>Betaproteobacteria</taxon>
        <taxon>Nitrosomonadales</taxon>
        <taxon>Methylophilaceae</taxon>
        <taxon>Methylobacillus</taxon>
    </lineage>
</organism>
<accession>Q1H0F3</accession>